<comment type="subunit">
    <text evidence="1">Part of the 30S ribosomal subunit.</text>
</comment>
<comment type="subcellular location">
    <subcellularLocation>
        <location>Plastid</location>
    </subcellularLocation>
</comment>
<comment type="similarity">
    <text evidence="2">Belongs to the universal ribosomal protein uS3 family.</text>
</comment>
<comment type="caution">
    <text evidence="2">Young tissue from this organism is photosynthetic and contains some thylakoids, although the photosynthetic activity does not exceed the light compensation point.</text>
</comment>
<keyword id="KW-0934">Plastid</keyword>
<keyword id="KW-0687">Ribonucleoprotein</keyword>
<keyword id="KW-0689">Ribosomal protein</keyword>
<keyword id="KW-0694">RNA-binding</keyword>
<keyword id="KW-0699">rRNA-binding</keyword>
<accession>A7M9A1</accession>
<feature type="chain" id="PRO_0000323324" description="Small ribosomal subunit protein uS3c">
    <location>
        <begin position="1"/>
        <end position="216"/>
    </location>
</feature>
<feature type="domain" description="KH type-2">
    <location>
        <begin position="43"/>
        <end position="118"/>
    </location>
</feature>
<dbReference type="EMBL" id="AM711640">
    <property type="protein sequence ID" value="CAM98429.1"/>
    <property type="molecule type" value="Genomic_DNA"/>
</dbReference>
<dbReference type="RefSeq" id="YP_001430142.1">
    <property type="nucleotide sequence ID" value="NC_009766.1"/>
</dbReference>
<dbReference type="SMR" id="A7M9A1"/>
<dbReference type="GeneID" id="5536620"/>
<dbReference type="GO" id="GO:0022627">
    <property type="term" value="C:cytosolic small ribosomal subunit"/>
    <property type="evidence" value="ECO:0007669"/>
    <property type="project" value="TreeGrafter"/>
</dbReference>
<dbReference type="GO" id="GO:0009536">
    <property type="term" value="C:plastid"/>
    <property type="evidence" value="ECO:0007669"/>
    <property type="project" value="UniProtKB-SubCell"/>
</dbReference>
<dbReference type="GO" id="GO:0019843">
    <property type="term" value="F:rRNA binding"/>
    <property type="evidence" value="ECO:0007669"/>
    <property type="project" value="UniProtKB-KW"/>
</dbReference>
<dbReference type="GO" id="GO:0003735">
    <property type="term" value="F:structural constituent of ribosome"/>
    <property type="evidence" value="ECO:0007669"/>
    <property type="project" value="InterPro"/>
</dbReference>
<dbReference type="GO" id="GO:0006412">
    <property type="term" value="P:translation"/>
    <property type="evidence" value="ECO:0007669"/>
    <property type="project" value="InterPro"/>
</dbReference>
<dbReference type="CDD" id="cd02412">
    <property type="entry name" value="KH-II_30S_S3"/>
    <property type="match status" value="1"/>
</dbReference>
<dbReference type="FunFam" id="3.30.1140.32:FF:000003">
    <property type="entry name" value="30S ribosomal protein S3, chloroplastic"/>
    <property type="match status" value="1"/>
</dbReference>
<dbReference type="FunFam" id="3.30.300.20:FF:000008">
    <property type="entry name" value="30S ribosomal protein S3, chloroplastic"/>
    <property type="match status" value="1"/>
</dbReference>
<dbReference type="Gene3D" id="3.30.300.20">
    <property type="match status" value="1"/>
</dbReference>
<dbReference type="Gene3D" id="3.30.1140.32">
    <property type="entry name" value="Ribosomal protein S3, C-terminal domain"/>
    <property type="match status" value="1"/>
</dbReference>
<dbReference type="HAMAP" id="MF_01309_B">
    <property type="entry name" value="Ribosomal_uS3_B"/>
    <property type="match status" value="1"/>
</dbReference>
<dbReference type="InterPro" id="IPR015946">
    <property type="entry name" value="KH_dom-like_a/b"/>
</dbReference>
<dbReference type="InterPro" id="IPR004044">
    <property type="entry name" value="KH_dom_type_2"/>
</dbReference>
<dbReference type="InterPro" id="IPR009019">
    <property type="entry name" value="KH_sf_prok-type"/>
</dbReference>
<dbReference type="InterPro" id="IPR036419">
    <property type="entry name" value="Ribosomal_S3_C_sf"/>
</dbReference>
<dbReference type="InterPro" id="IPR005704">
    <property type="entry name" value="Ribosomal_uS3_bac-typ"/>
</dbReference>
<dbReference type="InterPro" id="IPR001351">
    <property type="entry name" value="Ribosomal_uS3_C"/>
</dbReference>
<dbReference type="InterPro" id="IPR018280">
    <property type="entry name" value="Ribosomal_uS3_CS"/>
</dbReference>
<dbReference type="NCBIfam" id="TIGR01009">
    <property type="entry name" value="rpsC_bact"/>
    <property type="match status" value="1"/>
</dbReference>
<dbReference type="PANTHER" id="PTHR11760">
    <property type="entry name" value="30S/40S RIBOSOMAL PROTEIN S3"/>
    <property type="match status" value="1"/>
</dbReference>
<dbReference type="PANTHER" id="PTHR11760:SF19">
    <property type="entry name" value="SMALL RIBOSOMAL SUBUNIT PROTEIN US3C"/>
    <property type="match status" value="1"/>
</dbReference>
<dbReference type="Pfam" id="PF00189">
    <property type="entry name" value="Ribosomal_S3_C"/>
    <property type="match status" value="1"/>
</dbReference>
<dbReference type="SUPFAM" id="SSF54814">
    <property type="entry name" value="Prokaryotic type KH domain (KH-domain type II)"/>
    <property type="match status" value="1"/>
</dbReference>
<dbReference type="SUPFAM" id="SSF54821">
    <property type="entry name" value="Ribosomal protein S3 C-terminal domain"/>
    <property type="match status" value="1"/>
</dbReference>
<dbReference type="PROSITE" id="PS50823">
    <property type="entry name" value="KH_TYPE_2"/>
    <property type="match status" value="1"/>
</dbReference>
<dbReference type="PROSITE" id="PS00548">
    <property type="entry name" value="RIBOSOMAL_S3"/>
    <property type="match status" value="1"/>
</dbReference>
<sequence>MGQKINPLGFRLGTTQDHHSLWFSQPKNYSESLQEDKKIRDFINNYVKKNMRKASGAEGIARISIQKRIDLIQVVIFMGFPKFLIETRPQGIEELQRTLQKEFNCGNQKLNITITRIEKPYGNPNILAEFIAVQLKNRVSFRKAIKKAIELAEQADTKGIQVQIAGRIDGKEIARVEWIREGRVPRQTIRANLDYSSYPVRTIYGVLGIKIWIFID</sequence>
<gene>
    <name type="primary">rps3</name>
</gene>
<name>RR3_CUSRE</name>
<proteinExistence type="inferred from homology"/>
<protein>
    <recommendedName>
        <fullName evidence="2">Small ribosomal subunit protein uS3c</fullName>
    </recommendedName>
    <alternativeName>
        <fullName>Plastid 30S ribosomal protein S3</fullName>
    </alternativeName>
</protein>
<reference key="1">
    <citation type="journal article" date="2007" name="BMC Plant Biol.">
        <title>Complete DNA sequences of the plastid genomes of two parasitic flowering plant species, Cuscuta reflexa and Cuscuta gronovii.</title>
        <authorList>
            <person name="Funk H.T."/>
            <person name="Berg S."/>
            <person name="Krupinska K."/>
            <person name="Maier U.-G."/>
            <person name="Krause K."/>
        </authorList>
    </citation>
    <scope>NUCLEOTIDE SEQUENCE [LARGE SCALE GENOMIC DNA]</scope>
</reference>
<organism>
    <name type="scientific">Cuscuta reflexa</name>
    <name type="common">Southern Asian dodder</name>
    <dbReference type="NCBI Taxonomy" id="4129"/>
    <lineage>
        <taxon>Eukaryota</taxon>
        <taxon>Viridiplantae</taxon>
        <taxon>Streptophyta</taxon>
        <taxon>Embryophyta</taxon>
        <taxon>Tracheophyta</taxon>
        <taxon>Spermatophyta</taxon>
        <taxon>Magnoliopsida</taxon>
        <taxon>eudicotyledons</taxon>
        <taxon>Gunneridae</taxon>
        <taxon>Pentapetalae</taxon>
        <taxon>asterids</taxon>
        <taxon>lamiids</taxon>
        <taxon>Solanales</taxon>
        <taxon>Convolvulaceae</taxon>
        <taxon>Cuscuteae</taxon>
        <taxon>Cuscuta</taxon>
        <taxon>Cuscuta subgen. Monogynella</taxon>
    </lineage>
</organism>
<evidence type="ECO:0000250" key="1"/>
<evidence type="ECO:0000305" key="2"/>
<geneLocation type="plastid"/>